<organism>
    <name type="scientific">Dehalococcoides mccartyi (strain ATCC BAA-2266 / KCTC 15142 / 195)</name>
    <name type="common">Dehalococcoides ethenogenes (strain 195)</name>
    <dbReference type="NCBI Taxonomy" id="243164"/>
    <lineage>
        <taxon>Bacteria</taxon>
        <taxon>Bacillati</taxon>
        <taxon>Chloroflexota</taxon>
        <taxon>Dehalococcoidia</taxon>
        <taxon>Dehalococcoidales</taxon>
        <taxon>Dehalococcoidaceae</taxon>
        <taxon>Dehalococcoides</taxon>
    </lineage>
</organism>
<name>ATPA_DEHM1</name>
<comment type="function">
    <text evidence="1">Produces ATP from ADP in the presence of a proton gradient across the membrane. The alpha chain is a regulatory subunit.</text>
</comment>
<comment type="catalytic activity">
    <reaction evidence="1">
        <text>ATP + H2O + 4 H(+)(in) = ADP + phosphate + 5 H(+)(out)</text>
        <dbReference type="Rhea" id="RHEA:57720"/>
        <dbReference type="ChEBI" id="CHEBI:15377"/>
        <dbReference type="ChEBI" id="CHEBI:15378"/>
        <dbReference type="ChEBI" id="CHEBI:30616"/>
        <dbReference type="ChEBI" id="CHEBI:43474"/>
        <dbReference type="ChEBI" id="CHEBI:456216"/>
        <dbReference type="EC" id="7.1.2.2"/>
    </reaction>
</comment>
<comment type="subunit">
    <text evidence="1">F-type ATPases have 2 components, CF(1) - the catalytic core - and CF(0) - the membrane proton channel. CF(1) has five subunits: alpha(3), beta(3), gamma(1), delta(1), epsilon(1). CF(0) has three main subunits: a(1), b(2) and c(9-12). The alpha and beta chains form an alternating ring which encloses part of the gamma chain. CF(1) is attached to CF(0) by a central stalk formed by the gamma and epsilon chains, while a peripheral stalk is formed by the delta and b chains.</text>
</comment>
<comment type="subcellular location">
    <subcellularLocation>
        <location evidence="1">Cell membrane</location>
        <topology evidence="1">Peripheral membrane protein</topology>
    </subcellularLocation>
</comment>
<comment type="similarity">
    <text evidence="1">Belongs to the ATPase alpha/beta chains family.</text>
</comment>
<reference key="1">
    <citation type="journal article" date="2005" name="Science">
        <title>Genome sequence of the PCE-dechlorinating bacterium Dehalococcoides ethenogenes.</title>
        <authorList>
            <person name="Seshadri R."/>
            <person name="Adrian L."/>
            <person name="Fouts D.E."/>
            <person name="Eisen J.A."/>
            <person name="Phillippy A.M."/>
            <person name="Methe B.A."/>
            <person name="Ward N.L."/>
            <person name="Nelson W.C."/>
            <person name="DeBoy R.T."/>
            <person name="Khouri H.M."/>
            <person name="Kolonay J.F."/>
            <person name="Dodson R.J."/>
            <person name="Daugherty S.C."/>
            <person name="Brinkac L.M."/>
            <person name="Sullivan S.A."/>
            <person name="Madupu R."/>
            <person name="Nelson K.E."/>
            <person name="Kang K.H."/>
            <person name="Impraim M."/>
            <person name="Tran K."/>
            <person name="Robinson J.M."/>
            <person name="Forberger H.A."/>
            <person name="Fraser C.M."/>
            <person name="Zinder S.H."/>
            <person name="Heidelberg J.F."/>
        </authorList>
    </citation>
    <scope>NUCLEOTIDE SEQUENCE [LARGE SCALE GENOMIC DNA]</scope>
    <source>
        <strain>ATCC BAA-2266 / KCTC 15142 / 195</strain>
    </source>
</reference>
<feature type="chain" id="PRO_0000238239" description="ATP synthase subunit alpha">
    <location>
        <begin position="1"/>
        <end position="503"/>
    </location>
</feature>
<feature type="binding site" evidence="1">
    <location>
        <begin position="169"/>
        <end position="176"/>
    </location>
    <ligand>
        <name>ATP</name>
        <dbReference type="ChEBI" id="CHEBI:30616"/>
    </ligand>
</feature>
<feature type="site" description="Required for activity" evidence="1">
    <location>
        <position position="362"/>
    </location>
</feature>
<keyword id="KW-0066">ATP synthesis</keyword>
<keyword id="KW-0067">ATP-binding</keyword>
<keyword id="KW-1003">Cell membrane</keyword>
<keyword id="KW-0139">CF(1)</keyword>
<keyword id="KW-0375">Hydrogen ion transport</keyword>
<keyword id="KW-0406">Ion transport</keyword>
<keyword id="KW-0472">Membrane</keyword>
<keyword id="KW-0547">Nucleotide-binding</keyword>
<keyword id="KW-1278">Translocase</keyword>
<keyword id="KW-0813">Transport</keyword>
<protein>
    <recommendedName>
        <fullName evidence="1">ATP synthase subunit alpha</fullName>
        <ecNumber evidence="1">7.1.2.2</ecNumber>
    </recommendedName>
    <alternativeName>
        <fullName evidence="1">ATP synthase F1 sector subunit alpha</fullName>
    </alternativeName>
    <alternativeName>
        <fullName evidence="1">F-ATPase subunit alpha</fullName>
    </alternativeName>
</protein>
<proteinExistence type="inferred from homology"/>
<dbReference type="EC" id="7.1.2.2" evidence="1"/>
<dbReference type="EMBL" id="CP000027">
    <property type="protein sequence ID" value="AAW40133.1"/>
    <property type="molecule type" value="Genomic_DNA"/>
</dbReference>
<dbReference type="RefSeq" id="WP_010936338.1">
    <property type="nucleotide sequence ID" value="NC_002936.3"/>
</dbReference>
<dbReference type="SMR" id="Q3Z8Z4"/>
<dbReference type="FunCoup" id="Q3Z8Z4">
    <property type="interactions" value="312"/>
</dbReference>
<dbReference type="STRING" id="243164.DET0562"/>
<dbReference type="GeneID" id="3230096"/>
<dbReference type="KEGG" id="det:DET0562"/>
<dbReference type="eggNOG" id="COG0056">
    <property type="taxonomic scope" value="Bacteria"/>
</dbReference>
<dbReference type="HOGENOM" id="CLU_010091_2_1_0"/>
<dbReference type="InParanoid" id="Q3Z8Z4"/>
<dbReference type="Proteomes" id="UP000008289">
    <property type="component" value="Chromosome"/>
</dbReference>
<dbReference type="GO" id="GO:0005886">
    <property type="term" value="C:plasma membrane"/>
    <property type="evidence" value="ECO:0007669"/>
    <property type="project" value="UniProtKB-SubCell"/>
</dbReference>
<dbReference type="GO" id="GO:0045259">
    <property type="term" value="C:proton-transporting ATP synthase complex"/>
    <property type="evidence" value="ECO:0007669"/>
    <property type="project" value="UniProtKB-KW"/>
</dbReference>
<dbReference type="GO" id="GO:0043531">
    <property type="term" value="F:ADP binding"/>
    <property type="evidence" value="ECO:0007669"/>
    <property type="project" value="TreeGrafter"/>
</dbReference>
<dbReference type="GO" id="GO:0005524">
    <property type="term" value="F:ATP binding"/>
    <property type="evidence" value="ECO:0007669"/>
    <property type="project" value="UniProtKB-UniRule"/>
</dbReference>
<dbReference type="GO" id="GO:0046933">
    <property type="term" value="F:proton-transporting ATP synthase activity, rotational mechanism"/>
    <property type="evidence" value="ECO:0007669"/>
    <property type="project" value="UniProtKB-UniRule"/>
</dbReference>
<dbReference type="CDD" id="cd18113">
    <property type="entry name" value="ATP-synt_F1_alpha_C"/>
    <property type="match status" value="1"/>
</dbReference>
<dbReference type="CDD" id="cd18116">
    <property type="entry name" value="ATP-synt_F1_alpha_N"/>
    <property type="match status" value="1"/>
</dbReference>
<dbReference type="CDD" id="cd01132">
    <property type="entry name" value="F1-ATPase_alpha_CD"/>
    <property type="match status" value="1"/>
</dbReference>
<dbReference type="FunFam" id="1.20.150.20:FF:000001">
    <property type="entry name" value="ATP synthase subunit alpha"/>
    <property type="match status" value="1"/>
</dbReference>
<dbReference type="FunFam" id="2.40.30.20:FF:000001">
    <property type="entry name" value="ATP synthase subunit alpha"/>
    <property type="match status" value="1"/>
</dbReference>
<dbReference type="FunFam" id="3.40.50.300:FF:000002">
    <property type="entry name" value="ATP synthase subunit alpha"/>
    <property type="match status" value="1"/>
</dbReference>
<dbReference type="Gene3D" id="2.40.30.20">
    <property type="match status" value="1"/>
</dbReference>
<dbReference type="Gene3D" id="1.20.150.20">
    <property type="entry name" value="ATP synthase alpha/beta chain, C-terminal domain"/>
    <property type="match status" value="1"/>
</dbReference>
<dbReference type="Gene3D" id="3.40.50.300">
    <property type="entry name" value="P-loop containing nucleotide triphosphate hydrolases"/>
    <property type="match status" value="1"/>
</dbReference>
<dbReference type="HAMAP" id="MF_01346">
    <property type="entry name" value="ATP_synth_alpha_bact"/>
    <property type="match status" value="1"/>
</dbReference>
<dbReference type="InterPro" id="IPR023366">
    <property type="entry name" value="ATP_synth_asu-like_sf"/>
</dbReference>
<dbReference type="InterPro" id="IPR000793">
    <property type="entry name" value="ATP_synth_asu_C"/>
</dbReference>
<dbReference type="InterPro" id="IPR038376">
    <property type="entry name" value="ATP_synth_asu_C_sf"/>
</dbReference>
<dbReference type="InterPro" id="IPR033732">
    <property type="entry name" value="ATP_synth_F1_a_nt-bd_dom"/>
</dbReference>
<dbReference type="InterPro" id="IPR005294">
    <property type="entry name" value="ATP_synth_F1_asu"/>
</dbReference>
<dbReference type="InterPro" id="IPR020003">
    <property type="entry name" value="ATPase_a/bsu_AS"/>
</dbReference>
<dbReference type="InterPro" id="IPR004100">
    <property type="entry name" value="ATPase_F1/V1/A1_a/bsu_N"/>
</dbReference>
<dbReference type="InterPro" id="IPR036121">
    <property type="entry name" value="ATPase_F1/V1/A1_a/bsu_N_sf"/>
</dbReference>
<dbReference type="InterPro" id="IPR000194">
    <property type="entry name" value="ATPase_F1/V1/A1_a/bsu_nucl-bd"/>
</dbReference>
<dbReference type="InterPro" id="IPR027417">
    <property type="entry name" value="P-loop_NTPase"/>
</dbReference>
<dbReference type="NCBIfam" id="TIGR00962">
    <property type="entry name" value="atpA"/>
    <property type="match status" value="1"/>
</dbReference>
<dbReference type="NCBIfam" id="NF009884">
    <property type="entry name" value="PRK13343.1"/>
    <property type="match status" value="1"/>
</dbReference>
<dbReference type="PANTHER" id="PTHR48082">
    <property type="entry name" value="ATP SYNTHASE SUBUNIT ALPHA, MITOCHONDRIAL"/>
    <property type="match status" value="1"/>
</dbReference>
<dbReference type="PANTHER" id="PTHR48082:SF2">
    <property type="entry name" value="ATP SYNTHASE SUBUNIT ALPHA, MITOCHONDRIAL"/>
    <property type="match status" value="1"/>
</dbReference>
<dbReference type="Pfam" id="PF00006">
    <property type="entry name" value="ATP-synt_ab"/>
    <property type="match status" value="1"/>
</dbReference>
<dbReference type="Pfam" id="PF00306">
    <property type="entry name" value="ATP-synt_ab_C"/>
    <property type="match status" value="1"/>
</dbReference>
<dbReference type="Pfam" id="PF02874">
    <property type="entry name" value="ATP-synt_ab_N"/>
    <property type="match status" value="1"/>
</dbReference>
<dbReference type="PIRSF" id="PIRSF039088">
    <property type="entry name" value="F_ATPase_subunit_alpha"/>
    <property type="match status" value="1"/>
</dbReference>
<dbReference type="SUPFAM" id="SSF47917">
    <property type="entry name" value="C-terminal domain of alpha and beta subunits of F1 ATP synthase"/>
    <property type="match status" value="1"/>
</dbReference>
<dbReference type="SUPFAM" id="SSF50615">
    <property type="entry name" value="N-terminal domain of alpha and beta subunits of F1 ATP synthase"/>
    <property type="match status" value="1"/>
</dbReference>
<dbReference type="SUPFAM" id="SSF52540">
    <property type="entry name" value="P-loop containing nucleoside triphosphate hydrolases"/>
    <property type="match status" value="1"/>
</dbReference>
<dbReference type="PROSITE" id="PS00152">
    <property type="entry name" value="ATPASE_ALPHA_BETA"/>
    <property type="match status" value="1"/>
</dbReference>
<evidence type="ECO:0000255" key="1">
    <source>
        <dbReference type="HAMAP-Rule" id="MF_01346"/>
    </source>
</evidence>
<gene>
    <name evidence="1" type="primary">atpA</name>
    <name type="ordered locus">DET0562</name>
</gene>
<accession>Q3Z8Z4</accession>
<sequence length="503" mass="54085">MSARGQDIVSIIKEQIKEFGAPVSMTSVGSVIEVGDGIARIHGLSNAKYNELLEFPGGVMGIALNLEEDSVAAVILGDDANIKEGDEVKATGRISEITVGKGMIGRVVDPLGRPLDGKGPIKAETVRPLERIAPNVVDRKSVNTPVQTGIKAIDAMIPIGRGQRELIIGDRSTGKTAIALDTIINQKGGDLVCIYVAIGQKASKVARTVALLEQYGAMEHTIVVAANSSDAVALQYLAPYAGCAIGEEFMEQGQDALVVYDDLTKHAWAYRQLSLLLRRPPGREAYPGDVFYLHSRLLERAARLNDKLGGGSLTALPIIETQAGDVSAYVPTNVISITDGQIYLEPDMFNSGIRPAVNVGISVSRVGSSAQTKAMKKVASKLKMDMGQYRELAAFAQFGTSELDKATRMQLERGQRITEVLKQGQYQPVPMANQVAILYAALNGYLDSVEVAKVRDFESGLYRFLEANFASVLNNITKENAISAETETALKTALDDYKKGLVV</sequence>